<sequence>MFNSDNLRLDGKCAIITGAGAGIGKEIAITFATAGASVVVSDINADAANHVVDEIQQLGGQAFACRCDITSEQELSALADFAISKLGKVDILVNNAGGGGPKPFDMPMADFRRAYELNVFSFFHLSQLVAPEMEKNGGGVILTITSMAAENKNINMTSYASSKAAASHLVRNMAFDLGEKNIRVNGIAPGAILTDALKSVITPEIEQKMLQHTPIRRLGQPQDIANAALFLCSPAASWVSGQILTVSGGGVQELN</sequence>
<name>HDHA_ECOLI</name>
<keyword id="KW-0002">3D-structure</keyword>
<keyword id="KW-0088">Bile acid catabolism</keyword>
<keyword id="KW-0903">Direct protein sequencing</keyword>
<keyword id="KW-0442">Lipid degradation</keyword>
<keyword id="KW-0443">Lipid metabolism</keyword>
<keyword id="KW-0520">NAD</keyword>
<keyword id="KW-0560">Oxidoreductase</keyword>
<keyword id="KW-1185">Reference proteome</keyword>
<keyword id="KW-0753">Steroid metabolism</keyword>
<comment type="function">
    <text evidence="1 2">7alpha-hydroxysteroid dehydrogenase involved in the metabolism of bile acids. Catalyzes the NAD(+)-dependent oxidation of the 7alpha-hydroxy group of 7alpha-hydroxysteroids, such as the major human bile acids cholate and chenodeoxycholate, to the corresponding 7-oxosteroids. To a lesser extent, can also act on taurochenodeoxycholate, taurocholate and glycocholate (PubMed:2007545). Can also use glycochenodeoxycholate as substrate (PubMed:8672472). Is not able to use NADP(+) instead of NAD(+) as the electron acceptor (PubMed:2007545).</text>
</comment>
<comment type="catalytic activity">
    <reaction evidence="1 3">
        <text>cholate + NAD(+) = 3alpha,12alpha-dihydroxy-7-oxo-5beta-cholanate + NADH + H(+)</text>
        <dbReference type="Rhea" id="RHEA:19409"/>
        <dbReference type="ChEBI" id="CHEBI:11893"/>
        <dbReference type="ChEBI" id="CHEBI:15378"/>
        <dbReference type="ChEBI" id="CHEBI:29747"/>
        <dbReference type="ChEBI" id="CHEBI:57540"/>
        <dbReference type="ChEBI" id="CHEBI:57945"/>
        <dbReference type="EC" id="1.1.1.159"/>
    </reaction>
    <physiologicalReaction direction="left-to-right" evidence="6">
        <dbReference type="Rhea" id="RHEA:19410"/>
    </physiologicalReaction>
</comment>
<comment type="catalytic activity">
    <reaction evidence="1">
        <text>chenodeoxycholate + NAD(+) = 7-oxolithocholate + NADH + H(+)</text>
        <dbReference type="Rhea" id="RHEA:42036"/>
        <dbReference type="ChEBI" id="CHEBI:15378"/>
        <dbReference type="ChEBI" id="CHEBI:36234"/>
        <dbReference type="ChEBI" id="CHEBI:57540"/>
        <dbReference type="ChEBI" id="CHEBI:57945"/>
        <dbReference type="ChEBI" id="CHEBI:78605"/>
    </reaction>
    <physiologicalReaction direction="left-to-right" evidence="6">
        <dbReference type="Rhea" id="RHEA:42037"/>
    </physiologicalReaction>
</comment>
<comment type="catalytic activity">
    <reaction evidence="1">
        <text>taurochenodeoxycholate + NAD(+) = 7-oxotaurolithocholate + NADH + H(+)</text>
        <dbReference type="Rhea" id="RHEA:53824"/>
        <dbReference type="ChEBI" id="CHEBI:9407"/>
        <dbReference type="ChEBI" id="CHEBI:15378"/>
        <dbReference type="ChEBI" id="CHEBI:57540"/>
        <dbReference type="ChEBI" id="CHEBI:57945"/>
        <dbReference type="ChEBI" id="CHEBI:137724"/>
    </reaction>
    <physiologicalReaction direction="left-to-right" evidence="6">
        <dbReference type="Rhea" id="RHEA:53825"/>
    </physiologicalReaction>
</comment>
<comment type="catalytic activity">
    <reaction evidence="1">
        <text>taurocholate + NAD(+) = 7-oxo-taurodeoxycholate + NADH + H(+)</text>
        <dbReference type="Rhea" id="RHEA:53848"/>
        <dbReference type="ChEBI" id="CHEBI:15378"/>
        <dbReference type="ChEBI" id="CHEBI:36257"/>
        <dbReference type="ChEBI" id="CHEBI:57540"/>
        <dbReference type="ChEBI" id="CHEBI:57945"/>
        <dbReference type="ChEBI" id="CHEBI:137820"/>
    </reaction>
    <physiologicalReaction direction="left-to-right" evidence="6">
        <dbReference type="Rhea" id="RHEA:53849"/>
    </physiologicalReaction>
</comment>
<comment type="catalytic activity">
    <reaction evidence="1">
        <text>glycocholate + NAD(+) = 7-oxo-glycodeoxycholate + NADH + H(+)</text>
        <dbReference type="Rhea" id="RHEA:53852"/>
        <dbReference type="ChEBI" id="CHEBI:15378"/>
        <dbReference type="ChEBI" id="CHEBI:29746"/>
        <dbReference type="ChEBI" id="CHEBI:57540"/>
        <dbReference type="ChEBI" id="CHEBI:57945"/>
        <dbReference type="ChEBI" id="CHEBI:137824"/>
    </reaction>
    <physiologicalReaction direction="left-to-right" evidence="6">
        <dbReference type="Rhea" id="RHEA:53853"/>
    </physiologicalReaction>
</comment>
<comment type="catalytic activity">
    <reaction evidence="2">
        <text>glycochenodeoxycholate + NAD(+) = 7-oxoglycolithocholate + NADH + H(+)</text>
        <dbReference type="Rhea" id="RHEA:53844"/>
        <dbReference type="ChEBI" id="CHEBI:15378"/>
        <dbReference type="ChEBI" id="CHEBI:36252"/>
        <dbReference type="ChEBI" id="CHEBI:57540"/>
        <dbReference type="ChEBI" id="CHEBI:57945"/>
        <dbReference type="ChEBI" id="CHEBI:137818"/>
    </reaction>
    <physiologicalReaction direction="left-to-right" evidence="7">
        <dbReference type="Rhea" id="RHEA:53845"/>
    </physiologicalReaction>
</comment>
<comment type="activity regulation">
    <text evidence="1">Inhibited by N-bromosuccinimide, diethyl pyrocarbonate, and some metal ions such as Co(2+), Fe(2+) and Cu(2+).</text>
</comment>
<comment type="biophysicochemical properties">
    <kinetics>
        <KM evidence="1">0.19 mM for taurochenodeoxycholate</KM>
        <KM evidence="1">0.43 mM for chenodeoxycholate</KM>
        <KM evidence="1">1.2 mM for cholate</KM>
        <KM evidence="1">1.25 mM for glycocholate</KM>
        <KM evidence="1">2 mM for taurocholate</KM>
        <KM evidence="3">0.279 mM for NAD(+)</KM>
        <KM evidence="3">0.361 mM for cholate</KM>
        <text evidence="1 3">kcat is 3798 sec(-1) with cholate as substrate (PubMed:2007545). kcat is 491 sec(-1) with chenodeoxycholate as substrate (PubMed:2007545). kcat is 206 sec(-1) with taurochenodeoxycholate as substrate (PubMed:2007545). kcat is 188 sec(-1) with taurocholate as substrate (PubMed:2007545). kcat is 25 sec(-1) with glycocholate as substrate (PubMed:2007545). kcat is 151 sec(-1) with cholate as substrate (PubMed:9722677).</text>
    </kinetics>
    <phDependence>
        <text evidence="1">Optimum pH is 8.5 (PubMed:2007545). The enzyme is stable between pH 8 and 9 (PubMed:2007545).</text>
    </phDependence>
</comment>
<comment type="subunit">
    <text evidence="1 2">Homotetramer.</text>
</comment>
<comment type="similarity">
    <text evidence="5">Belongs to the short-chain dehydrogenases/reductases (SDR) family.</text>
</comment>
<protein>
    <recommendedName>
        <fullName evidence="4">7alpha-hydroxysteroid dehydrogenase</fullName>
        <shortName evidence="4">7alpha-HSDH</shortName>
        <ecNumber evidence="1 3">1.1.1.159</ecNumber>
    </recommendedName>
    <alternativeName>
        <fullName evidence="6">NAD-dependent 7alpha-hydroxysteroid dehydrogenase</fullName>
    </alternativeName>
</protein>
<evidence type="ECO:0000269" key="1">
    <source>
    </source>
</evidence>
<evidence type="ECO:0000269" key="2">
    <source>
    </source>
</evidence>
<evidence type="ECO:0000269" key="3">
    <source>
    </source>
</evidence>
<evidence type="ECO:0000303" key="4">
    <source>
    </source>
</evidence>
<evidence type="ECO:0000305" key="5"/>
<evidence type="ECO:0000305" key="6">
    <source>
    </source>
</evidence>
<evidence type="ECO:0000305" key="7">
    <source>
    </source>
</evidence>
<evidence type="ECO:0000305" key="8">
    <source>
    </source>
</evidence>
<evidence type="ECO:0007744" key="9">
    <source>
        <dbReference type="PDB" id="1AHH"/>
    </source>
</evidence>
<evidence type="ECO:0007744" key="10">
    <source>
        <dbReference type="PDB" id="1AHI"/>
    </source>
</evidence>
<evidence type="ECO:0007744" key="11">
    <source>
        <dbReference type="PDB" id="1FMC"/>
    </source>
</evidence>
<evidence type="ECO:0007829" key="12">
    <source>
        <dbReference type="PDB" id="1FMC"/>
    </source>
</evidence>
<feature type="chain" id="PRO_0000054708" description="7alpha-hydroxysteroid dehydrogenase">
    <location>
        <begin position="1"/>
        <end position="255"/>
    </location>
</feature>
<feature type="active site" description="Proton acceptor" evidence="7 8">
    <location>
        <position position="159"/>
    </location>
</feature>
<feature type="binding site" evidence="2 10 11">
    <location>
        <position position="23"/>
    </location>
    <ligand>
        <name>NAD(+)</name>
        <dbReference type="ChEBI" id="CHEBI:57540"/>
    </ligand>
</feature>
<feature type="binding site" evidence="2 9 10 11">
    <location>
        <begin position="42"/>
        <end position="43"/>
    </location>
    <ligand>
        <name>NAD(+)</name>
        <dbReference type="ChEBI" id="CHEBI:57540"/>
    </ligand>
</feature>
<feature type="binding site" evidence="2 9 10 11">
    <location>
        <begin position="68"/>
        <end position="69"/>
    </location>
    <ligand>
        <name>NAD(+)</name>
        <dbReference type="ChEBI" id="CHEBI:57540"/>
    </ligand>
</feature>
<feature type="binding site" evidence="2 9 10 11">
    <location>
        <position position="95"/>
    </location>
    <ligand>
        <name>NAD(+)</name>
        <dbReference type="ChEBI" id="CHEBI:57540"/>
    </ligand>
</feature>
<feature type="binding site" evidence="2 10 11">
    <location>
        <position position="99"/>
    </location>
    <ligand>
        <name>glycochenodeoxycholate</name>
        <dbReference type="ChEBI" id="CHEBI:36252"/>
    </ligand>
</feature>
<feature type="binding site" evidence="2 10 11">
    <location>
        <position position="146"/>
    </location>
    <ligand>
        <name>glycochenodeoxycholate</name>
        <dbReference type="ChEBI" id="CHEBI:36252"/>
    </ligand>
</feature>
<feature type="binding site" evidence="2 10 11">
    <location>
        <position position="151"/>
    </location>
    <ligand>
        <name>glycochenodeoxycholate</name>
        <dbReference type="ChEBI" id="CHEBI:36252"/>
    </ligand>
</feature>
<feature type="binding site" evidence="2 10 11">
    <location>
        <position position="159"/>
    </location>
    <ligand>
        <name>glycochenodeoxycholate</name>
        <dbReference type="ChEBI" id="CHEBI:36252"/>
    </ligand>
</feature>
<feature type="binding site" evidence="2 10 11">
    <location>
        <position position="159"/>
    </location>
    <ligand>
        <name>NAD(+)</name>
        <dbReference type="ChEBI" id="CHEBI:57540"/>
    </ligand>
</feature>
<feature type="binding site" evidence="2 9 10 11">
    <location>
        <position position="163"/>
    </location>
    <ligand>
        <name>NAD(+)</name>
        <dbReference type="ChEBI" id="CHEBI:57540"/>
    </ligand>
</feature>
<feature type="binding site" evidence="2 9 10 11">
    <location>
        <begin position="192"/>
        <end position="194"/>
    </location>
    <ligand>
        <name>NAD(+)</name>
        <dbReference type="ChEBI" id="CHEBI:57540"/>
    </ligand>
</feature>
<feature type="site" description="Transition state stabilizer" evidence="7 8">
    <location>
        <position position="146"/>
    </location>
</feature>
<feature type="site" description="Lowers pKa of active site Tyr" evidence="7 8">
    <location>
        <position position="163"/>
    </location>
</feature>
<feature type="mutagenesis site" description="Reduction of the catalytic efficiency by over 65%. No effect on the affinity for cholate and NAD." evidence="3">
    <original>S</original>
    <variation>A</variation>
    <variation>H</variation>
    <location>
        <position position="146"/>
    </location>
</feature>
<feature type="mutagenesis site" description="Loss of activity." evidence="3">
    <original>Y</original>
    <variation>F</variation>
    <location>
        <position position="159"/>
    </location>
</feature>
<feature type="mutagenesis site" description="Reduction of the catalytic efficiency by 87.7%. No effect on the affinity for cholate and NAD." evidence="3">
    <original>Y</original>
    <variation>H</variation>
    <location>
        <position position="159"/>
    </location>
</feature>
<feature type="mutagenesis site" description="Reduction of the catalytic efficiency by 95%. No effect on the affinity for cholate and NAD." evidence="3">
    <original>K</original>
    <variation>I</variation>
    <location>
        <position position="163"/>
    </location>
</feature>
<feature type="mutagenesis site" description="Reduction of the catalytic efficiency by 35%. No effect on the affinity for cholate and NAD." evidence="3">
    <original>K</original>
    <variation>R</variation>
    <location>
        <position position="163"/>
    </location>
</feature>
<feature type="helix" evidence="12">
    <location>
        <begin position="4"/>
        <end position="7"/>
    </location>
</feature>
<feature type="strand" evidence="12">
    <location>
        <begin position="13"/>
        <end position="16"/>
    </location>
</feature>
<feature type="turn" evidence="12">
    <location>
        <begin position="17"/>
        <end position="20"/>
    </location>
</feature>
<feature type="helix" evidence="12">
    <location>
        <begin position="22"/>
        <end position="32"/>
    </location>
</feature>
<feature type="turn" evidence="12">
    <location>
        <begin position="33"/>
        <end position="35"/>
    </location>
</feature>
<feature type="strand" evidence="12">
    <location>
        <begin position="37"/>
        <end position="43"/>
    </location>
</feature>
<feature type="helix" evidence="12">
    <location>
        <begin position="45"/>
        <end position="57"/>
    </location>
</feature>
<feature type="strand" evidence="12">
    <location>
        <begin position="62"/>
        <end position="66"/>
    </location>
</feature>
<feature type="helix" evidence="12">
    <location>
        <begin position="72"/>
        <end position="86"/>
    </location>
</feature>
<feature type="strand" evidence="12">
    <location>
        <begin position="91"/>
        <end position="94"/>
    </location>
</feature>
<feature type="helix" evidence="12">
    <location>
        <begin position="108"/>
        <end position="118"/>
    </location>
</feature>
<feature type="helix" evidence="12">
    <location>
        <begin position="120"/>
        <end position="136"/>
    </location>
</feature>
<feature type="strand" evidence="12">
    <location>
        <begin position="139"/>
        <end position="144"/>
    </location>
</feature>
<feature type="helix" evidence="12">
    <location>
        <begin position="147"/>
        <end position="149"/>
    </location>
</feature>
<feature type="helix" evidence="12">
    <location>
        <begin position="157"/>
        <end position="178"/>
    </location>
</feature>
<feature type="turn" evidence="12">
    <location>
        <begin position="179"/>
        <end position="181"/>
    </location>
</feature>
<feature type="strand" evidence="12">
    <location>
        <begin position="182"/>
        <end position="189"/>
    </location>
</feature>
<feature type="helix" evidence="12">
    <location>
        <begin position="195"/>
        <end position="198"/>
    </location>
</feature>
<feature type="helix" evidence="12">
    <location>
        <begin position="203"/>
        <end position="211"/>
    </location>
</feature>
<feature type="helix" evidence="12">
    <location>
        <begin position="221"/>
        <end position="232"/>
    </location>
</feature>
<feature type="helix" evidence="12">
    <location>
        <begin position="234"/>
        <end position="236"/>
    </location>
</feature>
<feature type="strand" evidence="12">
    <location>
        <begin position="243"/>
        <end position="247"/>
    </location>
</feature>
<dbReference type="EC" id="1.1.1.159" evidence="1 3"/>
<dbReference type="EMBL" id="D10497">
    <property type="protein sequence ID" value="BAA01384.1"/>
    <property type="molecule type" value="Genomic_DNA"/>
</dbReference>
<dbReference type="EMBL" id="U00096">
    <property type="protein sequence ID" value="AAC74691.1"/>
    <property type="molecule type" value="Genomic_DNA"/>
</dbReference>
<dbReference type="EMBL" id="AP009048">
    <property type="protein sequence ID" value="BAA15370.1"/>
    <property type="molecule type" value="Genomic_DNA"/>
</dbReference>
<dbReference type="EMBL" id="M14641">
    <property type="protein sequence ID" value="AAA68921.1"/>
    <property type="molecule type" value="Genomic_DNA"/>
</dbReference>
<dbReference type="PIR" id="A38527">
    <property type="entry name" value="A38527"/>
</dbReference>
<dbReference type="RefSeq" id="NP_416136.1">
    <property type="nucleotide sequence ID" value="NC_000913.3"/>
</dbReference>
<dbReference type="RefSeq" id="WP_000483353.1">
    <property type="nucleotide sequence ID" value="NZ_STEB01000003.1"/>
</dbReference>
<dbReference type="PDB" id="1AHH">
    <property type="method" value="X-ray"/>
    <property type="resolution" value="2.30 A"/>
    <property type="chains" value="A/B=1-255"/>
</dbReference>
<dbReference type="PDB" id="1AHI">
    <property type="method" value="X-ray"/>
    <property type="resolution" value="2.30 A"/>
    <property type="chains" value="A/B=1-255"/>
</dbReference>
<dbReference type="PDB" id="1FMC">
    <property type="method" value="X-ray"/>
    <property type="resolution" value="1.80 A"/>
    <property type="chains" value="A/B=1-255"/>
</dbReference>
<dbReference type="PDB" id="7ENY">
    <property type="method" value="X-ray"/>
    <property type="resolution" value="2.70 A"/>
    <property type="chains" value="A/B/C/D/E/F/G/H=1-255"/>
</dbReference>
<dbReference type="PDBsum" id="1AHH"/>
<dbReference type="PDBsum" id="1AHI"/>
<dbReference type="PDBsum" id="1FMC"/>
<dbReference type="PDBsum" id="7ENY"/>
<dbReference type="SMR" id="P0AET8"/>
<dbReference type="BioGRID" id="4259598">
    <property type="interactions" value="37"/>
</dbReference>
<dbReference type="DIP" id="DIP-9875N"/>
<dbReference type="FunCoup" id="P0AET8">
    <property type="interactions" value="182"/>
</dbReference>
<dbReference type="IntAct" id="P0AET8">
    <property type="interactions" value="5"/>
</dbReference>
<dbReference type="STRING" id="511145.b1619"/>
<dbReference type="DrugBank" id="DB02123">
    <property type="generic name" value="Glycochenodeoxycholic Acid"/>
</dbReference>
<dbReference type="SwissLipids" id="SLP:000001736"/>
<dbReference type="jPOST" id="P0AET8"/>
<dbReference type="PaxDb" id="511145-b1619"/>
<dbReference type="EnsemblBacteria" id="AAC74691">
    <property type="protein sequence ID" value="AAC74691"/>
    <property type="gene ID" value="b1619"/>
</dbReference>
<dbReference type="GeneID" id="75171679"/>
<dbReference type="GeneID" id="946151"/>
<dbReference type="KEGG" id="ag:BAA01384"/>
<dbReference type="KEGG" id="ecj:JW1611"/>
<dbReference type="KEGG" id="eco:b1619"/>
<dbReference type="KEGG" id="ecoc:C3026_09310"/>
<dbReference type="PATRIC" id="fig|1411691.4.peg.642"/>
<dbReference type="EchoBASE" id="EB0420"/>
<dbReference type="eggNOG" id="COG1028">
    <property type="taxonomic scope" value="Bacteria"/>
</dbReference>
<dbReference type="HOGENOM" id="CLU_010194_1_3_6"/>
<dbReference type="InParanoid" id="P0AET8"/>
<dbReference type="OMA" id="NSLACGP"/>
<dbReference type="OrthoDB" id="9804774at2"/>
<dbReference type="PhylomeDB" id="P0AET8"/>
<dbReference type="BioCyc" id="EcoCyc:7-ALPHA-HYDROXYSTEROID-DEH-MONOMER"/>
<dbReference type="BioCyc" id="MetaCyc:7-ALPHA-HYDROXYSTEROID-DEH-MONOMER"/>
<dbReference type="BRENDA" id="1.1.1.159">
    <property type="organism ID" value="2026"/>
</dbReference>
<dbReference type="EvolutionaryTrace" id="P0AET8"/>
<dbReference type="PRO" id="PR:P0AET8"/>
<dbReference type="Proteomes" id="UP000000625">
    <property type="component" value="Chromosome"/>
</dbReference>
<dbReference type="GO" id="GO:0005829">
    <property type="term" value="C:cytosol"/>
    <property type="evidence" value="ECO:0000314"/>
    <property type="project" value="EcoCyc"/>
</dbReference>
<dbReference type="GO" id="GO:0032991">
    <property type="term" value="C:protein-containing complex"/>
    <property type="evidence" value="ECO:0000314"/>
    <property type="project" value="EcoCyc"/>
</dbReference>
<dbReference type="GO" id="GO:0106281">
    <property type="term" value="F:chenodeoxycholate 7-alpha-dehydrogenase (NAD+) activity"/>
    <property type="evidence" value="ECO:0007669"/>
    <property type="project" value="RHEA"/>
</dbReference>
<dbReference type="GO" id="GO:0008709">
    <property type="term" value="F:cholate 7-alpha-dehydrogenase (NAD+) activity"/>
    <property type="evidence" value="ECO:0000314"/>
    <property type="project" value="UniProtKB"/>
</dbReference>
<dbReference type="GO" id="GO:0042802">
    <property type="term" value="F:identical protein binding"/>
    <property type="evidence" value="ECO:0000314"/>
    <property type="project" value="EcoCyc"/>
</dbReference>
<dbReference type="GO" id="GO:0051287">
    <property type="term" value="F:NAD binding"/>
    <property type="evidence" value="ECO:0000314"/>
    <property type="project" value="UniProtKB"/>
</dbReference>
<dbReference type="GO" id="GO:0030573">
    <property type="term" value="P:bile acid catabolic process"/>
    <property type="evidence" value="ECO:0000314"/>
    <property type="project" value="EcoCyc"/>
</dbReference>
<dbReference type="GO" id="GO:0016042">
    <property type="term" value="P:lipid catabolic process"/>
    <property type="evidence" value="ECO:0007669"/>
    <property type="project" value="UniProtKB-KW"/>
</dbReference>
<dbReference type="CDD" id="cd05365">
    <property type="entry name" value="7_alpha_HSDH_SDR_c"/>
    <property type="match status" value="1"/>
</dbReference>
<dbReference type="FunFam" id="3.40.50.720:FF:000279">
    <property type="entry name" value="7-alpha-hydroxysteroid dehydrogenase"/>
    <property type="match status" value="1"/>
</dbReference>
<dbReference type="Gene3D" id="3.40.50.720">
    <property type="entry name" value="NAD(P)-binding Rossmann-like Domain"/>
    <property type="match status" value="1"/>
</dbReference>
<dbReference type="InterPro" id="IPR036291">
    <property type="entry name" value="NAD(P)-bd_dom_sf"/>
</dbReference>
<dbReference type="InterPro" id="IPR020904">
    <property type="entry name" value="Sc_DH/Rdtase_CS"/>
</dbReference>
<dbReference type="InterPro" id="IPR050259">
    <property type="entry name" value="SDR"/>
</dbReference>
<dbReference type="InterPro" id="IPR002347">
    <property type="entry name" value="SDR_fam"/>
</dbReference>
<dbReference type="NCBIfam" id="NF004773">
    <property type="entry name" value="PRK06113.1"/>
    <property type="match status" value="1"/>
</dbReference>
<dbReference type="NCBIfam" id="NF005559">
    <property type="entry name" value="PRK07231.1"/>
    <property type="match status" value="1"/>
</dbReference>
<dbReference type="PANTHER" id="PTHR42879">
    <property type="entry name" value="3-OXOACYL-(ACYL-CARRIER-PROTEIN) REDUCTASE"/>
    <property type="match status" value="1"/>
</dbReference>
<dbReference type="PANTHER" id="PTHR42879:SF2">
    <property type="entry name" value="3-OXOACYL-[ACYL-CARRIER-PROTEIN] REDUCTASE FABG"/>
    <property type="match status" value="1"/>
</dbReference>
<dbReference type="Pfam" id="PF13561">
    <property type="entry name" value="adh_short_C2"/>
    <property type="match status" value="1"/>
</dbReference>
<dbReference type="PRINTS" id="PR00081">
    <property type="entry name" value="GDHRDH"/>
</dbReference>
<dbReference type="PRINTS" id="PR00080">
    <property type="entry name" value="SDRFAMILY"/>
</dbReference>
<dbReference type="SUPFAM" id="SSF51735">
    <property type="entry name" value="NAD(P)-binding Rossmann-fold domains"/>
    <property type="match status" value="1"/>
</dbReference>
<dbReference type="PROSITE" id="PS00061">
    <property type="entry name" value="ADH_SHORT"/>
    <property type="match status" value="1"/>
</dbReference>
<accession>P0AET8</accession>
<accession>P25529</accession>
<proteinExistence type="evidence at protein level"/>
<reference key="1">
    <citation type="journal article" date="1991" name="J. Bacteriol.">
        <title>Cloning and sequencing of the 7 alpha-hydroxysteroid dehydrogenase gene from Escherichia coli HB101 and characterization of the expressed enzyme.</title>
        <authorList>
            <person name="Yoshimoto T."/>
            <person name="Higashi H."/>
            <person name="Kanatani A."/>
            <person name="Lin X.S."/>
            <person name="Nagai H."/>
            <person name="Oyama H."/>
            <person name="Kurazono K."/>
            <person name="Tsuru D."/>
        </authorList>
    </citation>
    <scope>NUCLEOTIDE SEQUENCE [GENOMIC DNA]</scope>
    <scope>PARTIAL PROTEIN SEQUENCE</scope>
    <scope>FUNCTION</scope>
    <scope>CATALYTIC ACTIVITY</scope>
    <scope>BIOPHYSICOCHEMICAL PROPERTIES</scope>
    <scope>SUBSTRATE SPECIFICITY</scope>
    <scope>ACTIVITY REGULATION</scope>
    <scope>SUBUNIT</scope>
    <source>
        <strain>ATCC 33694 / HB101</strain>
    </source>
</reference>
<reference key="2">
    <citation type="journal article" date="1996" name="DNA Res.">
        <title>A 570-kb DNA sequence of the Escherichia coli K-12 genome corresponding to the 28.0-40.1 min region on the linkage map.</title>
        <authorList>
            <person name="Aiba H."/>
            <person name="Baba T."/>
            <person name="Fujita K."/>
            <person name="Hayashi K."/>
            <person name="Inada T."/>
            <person name="Isono K."/>
            <person name="Itoh T."/>
            <person name="Kasai H."/>
            <person name="Kashimoto K."/>
            <person name="Kimura S."/>
            <person name="Kitakawa M."/>
            <person name="Kitagawa M."/>
            <person name="Makino K."/>
            <person name="Miki T."/>
            <person name="Mizobuchi K."/>
            <person name="Mori H."/>
            <person name="Mori T."/>
            <person name="Motomura K."/>
            <person name="Nakade S."/>
            <person name="Nakamura Y."/>
            <person name="Nashimoto H."/>
            <person name="Nishio Y."/>
            <person name="Oshima T."/>
            <person name="Saito N."/>
            <person name="Sampei G."/>
            <person name="Seki Y."/>
            <person name="Sivasundaram S."/>
            <person name="Tagami H."/>
            <person name="Takeda J."/>
            <person name="Takemoto K."/>
            <person name="Takeuchi Y."/>
            <person name="Wada C."/>
            <person name="Yamamoto Y."/>
            <person name="Horiuchi T."/>
        </authorList>
    </citation>
    <scope>NUCLEOTIDE SEQUENCE [LARGE SCALE GENOMIC DNA]</scope>
    <source>
        <strain>K12 / W3110 / ATCC 27325 / DSM 5911</strain>
    </source>
</reference>
<reference key="3">
    <citation type="journal article" date="1997" name="Science">
        <title>The complete genome sequence of Escherichia coli K-12.</title>
        <authorList>
            <person name="Blattner F.R."/>
            <person name="Plunkett G. III"/>
            <person name="Bloch C.A."/>
            <person name="Perna N.T."/>
            <person name="Burland V."/>
            <person name="Riley M."/>
            <person name="Collado-Vides J."/>
            <person name="Glasner J.D."/>
            <person name="Rode C.K."/>
            <person name="Mayhew G.F."/>
            <person name="Gregor J."/>
            <person name="Davis N.W."/>
            <person name="Kirkpatrick H.A."/>
            <person name="Goeden M.A."/>
            <person name="Rose D.J."/>
            <person name="Mau B."/>
            <person name="Shao Y."/>
        </authorList>
    </citation>
    <scope>NUCLEOTIDE SEQUENCE [LARGE SCALE GENOMIC DNA]</scope>
    <source>
        <strain>K12 / MG1655 / ATCC 47076</strain>
    </source>
</reference>
<reference key="4">
    <citation type="journal article" date="2006" name="Mol. Syst. Biol.">
        <title>Highly accurate genome sequences of Escherichia coli K-12 strains MG1655 and W3110.</title>
        <authorList>
            <person name="Hayashi K."/>
            <person name="Morooka N."/>
            <person name="Yamamoto Y."/>
            <person name="Fujita K."/>
            <person name="Isono K."/>
            <person name="Choi S."/>
            <person name="Ohtsubo E."/>
            <person name="Baba T."/>
            <person name="Wanner B.L."/>
            <person name="Mori H."/>
            <person name="Horiuchi T."/>
        </authorList>
    </citation>
    <scope>NUCLEOTIDE SEQUENCE [LARGE SCALE GENOMIC DNA]</scope>
    <source>
        <strain>K12 / W3110 / ATCC 27325 / DSM 5911</strain>
    </source>
</reference>
<reference key="5">
    <citation type="submission" date="1994-10" db="EMBL/GenBank/DDBJ databases">
        <authorList>
            <person name="Jefferson R.A."/>
        </authorList>
    </citation>
    <scope>NUCLEOTIDE SEQUENCE [GENOMIC DNA] OF 169-255</scope>
</reference>
<reference evidence="9 10 11" key="6">
    <citation type="journal article" date="1996" name="Biochemistry">
        <title>Crystal structures of the binary and ternary complexes of 7 alpha-hydroxysteroid dehydrogenase from Escherichia coli.</title>
        <authorList>
            <person name="Tanaka N."/>
            <person name="Nonaka T."/>
            <person name="Tanabe T."/>
            <person name="Yoshimoto T."/>
            <person name="Tsuru D."/>
            <person name="Mitsui Y."/>
        </authorList>
    </citation>
    <scope>X-RAY CRYSTALLOGRAPHY (1.8 ANGSTROMS) IN COMPLEXES WITH GLYCOCHENODEOXYCHOLATE AND NAD</scope>
    <scope>FUNCTION</scope>
    <scope>CATALYTIC ACTIVITY</scope>
    <scope>SUBUNIT</scope>
    <scope>REACTION MECHANISM</scope>
    <scope>ACTIVE SITE</scope>
    <source>
        <strain>ATCC 33694 / HB101</strain>
    </source>
</reference>
<reference key="7">
    <citation type="journal article" date="1998" name="J. Biochem.">
        <title>Roles of the Ser146, Tyr159, and Lys163 residues in the catalytic action of 7alpha-hydroxysteroid dehydrogenase from Escherichia coli.</title>
        <authorList>
            <person name="Tanabe T."/>
            <person name="Tanaka N."/>
            <person name="Uchikawa K."/>
            <person name="Kabashima T."/>
            <person name="Ito K."/>
            <person name="Nonaka T."/>
            <person name="Mitsui Y."/>
            <person name="Tsuru M."/>
            <person name="Yoshimoto T."/>
        </authorList>
    </citation>
    <scope>X-RAY CRYSTALLOGRAPHY (1.8 ANGSTROMS) OF WILD-TYPE AND MUTANTS PHE-159; HIS-159 AND ARG-163</scope>
    <scope>CATALYTIC ACTIVITY</scope>
    <scope>BIOPHYSICOCHEMICAL PROPERTIES</scope>
    <scope>MUTAGENESIS OF SER-146; TYR-159 AND LYS-163</scope>
    <scope>REACTION MECHANISM</scope>
    <scope>ACTIVE SITE</scope>
</reference>
<organism>
    <name type="scientific">Escherichia coli (strain K12)</name>
    <dbReference type="NCBI Taxonomy" id="83333"/>
    <lineage>
        <taxon>Bacteria</taxon>
        <taxon>Pseudomonadati</taxon>
        <taxon>Pseudomonadota</taxon>
        <taxon>Gammaproteobacteria</taxon>
        <taxon>Enterobacterales</taxon>
        <taxon>Enterobacteriaceae</taxon>
        <taxon>Escherichia</taxon>
    </lineage>
</organism>
<gene>
    <name type="primary">hdhA</name>
    <name evidence="4" type="synonym">hsdH</name>
    <name type="ordered locus">b1619</name>
    <name type="ordered locus">JW1611</name>
</gene>